<keyword id="KW-0963">Cytoplasm</keyword>
<keyword id="KW-0520">NAD</keyword>
<keyword id="KW-0521">NADP</keyword>
<keyword id="KW-0560">Oxidoreductase</keyword>
<gene>
    <name evidence="1" type="primary">ghrB</name>
    <name type="ordered locus">SNSL254_A3925</name>
</gene>
<proteinExistence type="inferred from homology"/>
<dbReference type="EC" id="1.1.1.79" evidence="1"/>
<dbReference type="EC" id="1.1.1.81" evidence="1"/>
<dbReference type="EMBL" id="CP001113">
    <property type="protein sequence ID" value="ACF61559.1"/>
    <property type="molecule type" value="Genomic_DNA"/>
</dbReference>
<dbReference type="RefSeq" id="WP_000804678.1">
    <property type="nucleotide sequence ID" value="NZ_CCMR01000004.1"/>
</dbReference>
<dbReference type="SMR" id="B4SWJ5"/>
<dbReference type="KEGG" id="see:SNSL254_A3925"/>
<dbReference type="HOGENOM" id="CLU_019796_1_2_6"/>
<dbReference type="Proteomes" id="UP000008824">
    <property type="component" value="Chromosome"/>
</dbReference>
<dbReference type="GO" id="GO:0005829">
    <property type="term" value="C:cytosol"/>
    <property type="evidence" value="ECO:0007669"/>
    <property type="project" value="TreeGrafter"/>
</dbReference>
<dbReference type="GO" id="GO:0005886">
    <property type="term" value="C:plasma membrane"/>
    <property type="evidence" value="ECO:0007669"/>
    <property type="project" value="UniProtKB-UniRule"/>
</dbReference>
<dbReference type="GO" id="GO:0030267">
    <property type="term" value="F:glyoxylate reductase (NADPH) activity"/>
    <property type="evidence" value="ECO:0007669"/>
    <property type="project" value="UniProtKB-UniRule"/>
</dbReference>
<dbReference type="GO" id="GO:0008465">
    <property type="term" value="F:hydroxypyruvate reductase (NADH) activity"/>
    <property type="evidence" value="ECO:0007669"/>
    <property type="project" value="RHEA"/>
</dbReference>
<dbReference type="GO" id="GO:0120509">
    <property type="term" value="F:hydroxypyruvate reductase (NADPH) activity"/>
    <property type="evidence" value="ECO:0007669"/>
    <property type="project" value="RHEA"/>
</dbReference>
<dbReference type="GO" id="GO:0051287">
    <property type="term" value="F:NAD binding"/>
    <property type="evidence" value="ECO:0007669"/>
    <property type="project" value="InterPro"/>
</dbReference>
<dbReference type="CDD" id="cd05301">
    <property type="entry name" value="GDH"/>
    <property type="match status" value="1"/>
</dbReference>
<dbReference type="FunFam" id="3.40.50.720:FF:000026">
    <property type="entry name" value="Glyoxylate/hydroxypyruvate reductase B"/>
    <property type="match status" value="1"/>
</dbReference>
<dbReference type="Gene3D" id="3.40.50.720">
    <property type="entry name" value="NAD(P)-binding Rossmann-like Domain"/>
    <property type="match status" value="2"/>
</dbReference>
<dbReference type="HAMAP" id="MF_01667">
    <property type="entry name" value="2_Hacid_dh_C_GhrB"/>
    <property type="match status" value="1"/>
</dbReference>
<dbReference type="InterPro" id="IPR050223">
    <property type="entry name" value="D-isomer_2-hydroxyacid_DH"/>
</dbReference>
<dbReference type="InterPro" id="IPR006139">
    <property type="entry name" value="D-isomer_2_OHA_DH_cat_dom"/>
</dbReference>
<dbReference type="InterPro" id="IPR029753">
    <property type="entry name" value="D-isomer_DH_CS"/>
</dbReference>
<dbReference type="InterPro" id="IPR006140">
    <property type="entry name" value="D-isomer_DH_NAD-bd"/>
</dbReference>
<dbReference type="InterPro" id="IPR023756">
    <property type="entry name" value="Glyo/OHPyrv_Rdtase_B"/>
</dbReference>
<dbReference type="InterPro" id="IPR036291">
    <property type="entry name" value="NAD(P)-bd_dom_sf"/>
</dbReference>
<dbReference type="NCBIfam" id="NF011938">
    <property type="entry name" value="PRK15409.1"/>
    <property type="match status" value="1"/>
</dbReference>
<dbReference type="PANTHER" id="PTHR10996">
    <property type="entry name" value="2-HYDROXYACID DEHYDROGENASE-RELATED"/>
    <property type="match status" value="1"/>
</dbReference>
<dbReference type="PANTHER" id="PTHR10996:SF283">
    <property type="entry name" value="GLYOXYLATE_HYDROXYPYRUVATE REDUCTASE B"/>
    <property type="match status" value="1"/>
</dbReference>
<dbReference type="Pfam" id="PF00389">
    <property type="entry name" value="2-Hacid_dh"/>
    <property type="match status" value="1"/>
</dbReference>
<dbReference type="Pfam" id="PF02826">
    <property type="entry name" value="2-Hacid_dh_C"/>
    <property type="match status" value="1"/>
</dbReference>
<dbReference type="SUPFAM" id="SSF52283">
    <property type="entry name" value="Formate/glycerate dehydrogenase catalytic domain-like"/>
    <property type="match status" value="1"/>
</dbReference>
<dbReference type="SUPFAM" id="SSF51735">
    <property type="entry name" value="NAD(P)-binding Rossmann-fold domains"/>
    <property type="match status" value="1"/>
</dbReference>
<dbReference type="PROSITE" id="PS00670">
    <property type="entry name" value="D_2_HYDROXYACID_DH_2"/>
    <property type="match status" value="1"/>
</dbReference>
<dbReference type="PROSITE" id="PS00671">
    <property type="entry name" value="D_2_HYDROXYACID_DH_3"/>
    <property type="match status" value="1"/>
</dbReference>
<sequence>MKPSIILYKTLPDDLLHRLEAHFTVTQVPNLHPETVARHAQAFASAQGLLGASETVNRALLEKMPALRAASTISVGYDNVEVDALTARKIVLMHTPAVLTETVADTVMALMLATARRVVDVAERVKAGEWTESIGPAWFGVDVHHKTLGIVGMGRIGMALAQRAHFGFTMPVLYHARRRHQEAEDRFNARYCDLDTLLQEADFVCVILPLTAETRHLFGATQFARMKSSAIFINAGRGPVVDENALIAALQNGEIYAAGLDVFEQEPLSVDSPLLNMSNVVAVPHIGSATHETRYNMMACAVDNLIDALQGKIEKNCVNPQAAG</sequence>
<organism>
    <name type="scientific">Salmonella newport (strain SL254)</name>
    <dbReference type="NCBI Taxonomy" id="423368"/>
    <lineage>
        <taxon>Bacteria</taxon>
        <taxon>Pseudomonadati</taxon>
        <taxon>Pseudomonadota</taxon>
        <taxon>Gammaproteobacteria</taxon>
        <taxon>Enterobacterales</taxon>
        <taxon>Enterobacteriaceae</taxon>
        <taxon>Salmonella</taxon>
    </lineage>
</organism>
<comment type="function">
    <text evidence="1">Catalyzes the NADPH-dependent reduction of glyoxylate and hydroxypyruvate into glycolate and glycerate, respectively.</text>
</comment>
<comment type="catalytic activity">
    <reaction evidence="1">
        <text>glycolate + NADP(+) = glyoxylate + NADPH + H(+)</text>
        <dbReference type="Rhea" id="RHEA:10992"/>
        <dbReference type="ChEBI" id="CHEBI:15378"/>
        <dbReference type="ChEBI" id="CHEBI:29805"/>
        <dbReference type="ChEBI" id="CHEBI:36655"/>
        <dbReference type="ChEBI" id="CHEBI:57783"/>
        <dbReference type="ChEBI" id="CHEBI:58349"/>
        <dbReference type="EC" id="1.1.1.79"/>
    </reaction>
</comment>
<comment type="catalytic activity">
    <reaction evidence="1">
        <text>(R)-glycerate + NAD(+) = 3-hydroxypyruvate + NADH + H(+)</text>
        <dbReference type="Rhea" id="RHEA:17905"/>
        <dbReference type="ChEBI" id="CHEBI:15378"/>
        <dbReference type="ChEBI" id="CHEBI:16659"/>
        <dbReference type="ChEBI" id="CHEBI:17180"/>
        <dbReference type="ChEBI" id="CHEBI:57540"/>
        <dbReference type="ChEBI" id="CHEBI:57945"/>
        <dbReference type="EC" id="1.1.1.81"/>
    </reaction>
</comment>
<comment type="catalytic activity">
    <reaction evidence="1">
        <text>(R)-glycerate + NADP(+) = 3-hydroxypyruvate + NADPH + H(+)</text>
        <dbReference type="Rhea" id="RHEA:18657"/>
        <dbReference type="ChEBI" id="CHEBI:15378"/>
        <dbReference type="ChEBI" id="CHEBI:16659"/>
        <dbReference type="ChEBI" id="CHEBI:17180"/>
        <dbReference type="ChEBI" id="CHEBI:57783"/>
        <dbReference type="ChEBI" id="CHEBI:58349"/>
        <dbReference type="EC" id="1.1.1.81"/>
    </reaction>
</comment>
<comment type="subunit">
    <text evidence="1">Homodimer.</text>
</comment>
<comment type="subcellular location">
    <subcellularLocation>
        <location evidence="1">Cytoplasm</location>
    </subcellularLocation>
</comment>
<comment type="similarity">
    <text evidence="1">Belongs to the D-isomer specific 2-hydroxyacid dehydrogenase family. GhrB subfamily.</text>
</comment>
<accession>B4SWJ5</accession>
<name>GHRB_SALNS</name>
<reference key="1">
    <citation type="journal article" date="2011" name="J. Bacteriol.">
        <title>Comparative genomics of 28 Salmonella enterica isolates: evidence for CRISPR-mediated adaptive sublineage evolution.</title>
        <authorList>
            <person name="Fricke W.F."/>
            <person name="Mammel M.K."/>
            <person name="McDermott P.F."/>
            <person name="Tartera C."/>
            <person name="White D.G."/>
            <person name="Leclerc J.E."/>
            <person name="Ravel J."/>
            <person name="Cebula T.A."/>
        </authorList>
    </citation>
    <scope>NUCLEOTIDE SEQUENCE [LARGE SCALE GENOMIC DNA]</scope>
    <source>
        <strain>SL254</strain>
    </source>
</reference>
<feature type="chain" id="PRO_1000187299" description="Glyoxylate/hydroxypyruvate reductase B">
    <location>
        <begin position="1"/>
        <end position="324"/>
    </location>
</feature>
<feature type="active site" evidence="1">
    <location>
        <position position="237"/>
    </location>
</feature>
<feature type="active site" evidence="1">
    <location>
        <position position="266"/>
    </location>
</feature>
<feature type="active site" description="Proton donor" evidence="1">
    <location>
        <position position="285"/>
    </location>
</feature>
<protein>
    <recommendedName>
        <fullName evidence="1">Glyoxylate/hydroxypyruvate reductase B</fullName>
        <ecNumber evidence="1">1.1.1.79</ecNumber>
        <ecNumber evidence="1">1.1.1.81</ecNumber>
    </recommendedName>
</protein>
<evidence type="ECO:0000255" key="1">
    <source>
        <dbReference type="HAMAP-Rule" id="MF_01667"/>
    </source>
</evidence>